<dbReference type="EMBL" id="BC073101">
    <property type="protein sequence ID" value="AAH73101.1"/>
    <property type="molecule type" value="mRNA"/>
</dbReference>
<dbReference type="RefSeq" id="NP_001085656.1">
    <property type="nucleotide sequence ID" value="NM_001092187.1"/>
</dbReference>
<dbReference type="GlyCosmos" id="Q6GPL4">
    <property type="glycosylation" value="2 sites, No reported glycans"/>
</dbReference>
<dbReference type="DNASU" id="444082"/>
<dbReference type="GeneID" id="444082"/>
<dbReference type="KEGG" id="xla:444082"/>
<dbReference type="AGR" id="Xenbase:XB-GENE-866465"/>
<dbReference type="CTD" id="444082"/>
<dbReference type="Xenbase" id="XB-GENE-866465">
    <property type="gene designation" value="tmem150a.L"/>
</dbReference>
<dbReference type="OMA" id="MVSGCIN"/>
<dbReference type="OrthoDB" id="9925752at2759"/>
<dbReference type="Proteomes" id="UP000186698">
    <property type="component" value="Chromosome 3L"/>
</dbReference>
<dbReference type="Bgee" id="444082">
    <property type="expression patterns" value="Expressed in neurula embryo and 19 other cell types or tissues"/>
</dbReference>
<dbReference type="GO" id="GO:0005886">
    <property type="term" value="C:plasma membrane"/>
    <property type="evidence" value="ECO:0000250"/>
    <property type="project" value="UniProtKB"/>
</dbReference>
<dbReference type="GO" id="GO:0046854">
    <property type="term" value="P:phosphatidylinositol phosphate biosynthetic process"/>
    <property type="evidence" value="ECO:0000250"/>
    <property type="project" value="UniProtKB"/>
</dbReference>
<dbReference type="GO" id="GO:0072659">
    <property type="term" value="P:protein localization to plasma membrane"/>
    <property type="evidence" value="ECO:0000250"/>
    <property type="project" value="UniProtKB"/>
</dbReference>
<dbReference type="InterPro" id="IPR050911">
    <property type="entry name" value="DRAM/TMEM150_Autophagy_Mod"/>
</dbReference>
<dbReference type="InterPro" id="IPR019402">
    <property type="entry name" value="Frag1/DRAM/Sfk1"/>
</dbReference>
<dbReference type="PANTHER" id="PTHR21324">
    <property type="entry name" value="FASTING-INDUCIBLE INTEGRAL MEMBRANE PROTEIN TM6P1-RELATED"/>
    <property type="match status" value="1"/>
</dbReference>
<dbReference type="PANTHER" id="PTHR21324:SF6">
    <property type="entry name" value="TRANSMEMBRANE PROTEIN 150A"/>
    <property type="match status" value="1"/>
</dbReference>
<dbReference type="Pfam" id="PF10277">
    <property type="entry name" value="Frag1"/>
    <property type="match status" value="1"/>
</dbReference>
<evidence type="ECO:0000250" key="1">
    <source>
        <dbReference type="UniProtKB" id="Q86TG1"/>
    </source>
</evidence>
<evidence type="ECO:0000255" key="2"/>
<evidence type="ECO:0000305" key="3"/>
<gene>
    <name type="primary">tmem150a</name>
    <name type="synonym">tmem150</name>
</gene>
<keyword id="KW-1003">Cell membrane</keyword>
<keyword id="KW-0325">Glycoprotein</keyword>
<keyword id="KW-0472">Membrane</keyword>
<keyword id="KW-1185">Reference proteome</keyword>
<keyword id="KW-0812">Transmembrane</keyword>
<keyword id="KW-1133">Transmembrane helix</keyword>
<reference key="1">
    <citation type="submission" date="2004-06" db="EMBL/GenBank/DDBJ databases">
        <authorList>
            <consortium name="NIH - Xenopus Gene Collection (XGC) project"/>
        </authorList>
    </citation>
    <scope>NUCLEOTIDE SEQUENCE [LARGE SCALE MRNA]</scope>
    <source>
        <tissue>Oocyte</tissue>
    </source>
</reference>
<name>T150A_XENLA</name>
<protein>
    <recommendedName>
        <fullName>Transmembrane protein 150A</fullName>
    </recommendedName>
    <alternativeName>
        <fullName>Transmembrane protein 150</fullName>
    </alternativeName>
</protein>
<accession>Q6GPL4</accession>
<organism>
    <name type="scientific">Xenopus laevis</name>
    <name type="common">African clawed frog</name>
    <dbReference type="NCBI Taxonomy" id="8355"/>
    <lineage>
        <taxon>Eukaryota</taxon>
        <taxon>Metazoa</taxon>
        <taxon>Chordata</taxon>
        <taxon>Craniata</taxon>
        <taxon>Vertebrata</taxon>
        <taxon>Euteleostomi</taxon>
        <taxon>Amphibia</taxon>
        <taxon>Batrachia</taxon>
        <taxon>Anura</taxon>
        <taxon>Pipoidea</taxon>
        <taxon>Pipidae</taxon>
        <taxon>Xenopodinae</taxon>
        <taxon>Xenopus</taxon>
        <taxon>Xenopus</taxon>
    </lineage>
</organism>
<proteinExistence type="evidence at transcript level"/>
<feature type="chain" id="PRO_0000274778" description="Transmembrane protein 150A">
    <location>
        <begin position="1"/>
        <end position="271"/>
    </location>
</feature>
<feature type="topological domain" description="Cytoplasmic" evidence="3">
    <location>
        <begin position="1"/>
        <end position="3"/>
    </location>
</feature>
<feature type="transmembrane region" description="Helical" evidence="2">
    <location>
        <begin position="4"/>
        <end position="24"/>
    </location>
</feature>
<feature type="topological domain" description="Extracellular" evidence="3">
    <location>
        <begin position="25"/>
        <end position="75"/>
    </location>
</feature>
<feature type="transmembrane region" description="Helical" evidence="2">
    <location>
        <begin position="76"/>
        <end position="96"/>
    </location>
</feature>
<feature type="topological domain" description="Cytoplasmic" evidence="3">
    <location>
        <begin position="97"/>
        <end position="108"/>
    </location>
</feature>
<feature type="transmembrane region" description="Helical" evidence="2">
    <location>
        <begin position="109"/>
        <end position="129"/>
    </location>
</feature>
<feature type="topological domain" description="Extracellular" evidence="3">
    <location>
        <begin position="130"/>
        <end position="140"/>
    </location>
</feature>
<feature type="transmembrane region" description="Helical" evidence="2">
    <location>
        <begin position="141"/>
        <end position="161"/>
    </location>
</feature>
<feature type="topological domain" description="Cytoplasmic" evidence="3">
    <location>
        <begin position="162"/>
        <end position="182"/>
    </location>
</feature>
<feature type="transmembrane region" description="Helical" evidence="2">
    <location>
        <begin position="183"/>
        <end position="203"/>
    </location>
</feature>
<feature type="topological domain" description="Extracellular" evidence="3">
    <location>
        <begin position="204"/>
        <end position="205"/>
    </location>
</feature>
<feature type="transmembrane region" description="Helical" evidence="2">
    <location>
        <begin position="206"/>
        <end position="226"/>
    </location>
</feature>
<feature type="topological domain" description="Cytoplasmic" evidence="1">
    <location>
        <begin position="227"/>
        <end position="271"/>
    </location>
</feature>
<feature type="glycosylation site" description="N-linked (GlcNAc...) asparagine" evidence="2">
    <location>
        <position position="37"/>
    </location>
</feature>
<feature type="glycosylation site" description="N-linked (GlcNAc...) asparagine" evidence="2">
    <location>
        <position position="41"/>
    </location>
</feature>
<sequence>MTGWIVLPISLTAFSIPGIWIVYAMAVMNHHVCPVENWTYNLTCTDDNTKAGTPKSCCTLEDVPLISKCGTYPPESCLFSLIGNVGAFMVVIICLLRYSQVIEISQRSWLNTTALIAGCTNAAGLVMVGNFQVDYAKSLHYIGAGVAFPAGLLFVCLSSILSYQLAASALDYWLGHLRVSLTIVALISLVLTGVFFIQESFLMQHLVAICEWIFVLDILVFYGTFAYEFGSVSTDTMMAALQSSAARSCKSPGSSSTSTQLHCNAERIAMI</sequence>
<comment type="function">
    <text evidence="1">Regulates localization of phosphatidylinositol 4-kinase (PI4K) to the plasma membrane.</text>
</comment>
<comment type="subcellular location">
    <subcellularLocation>
        <location evidence="1">Cell membrane</location>
        <topology evidence="1">Multi-pass membrane protein</topology>
    </subcellularLocation>
</comment>
<comment type="similarity">
    <text evidence="3">Belongs to the DRAM/TMEM150 family.</text>
</comment>